<gene>
    <name evidence="1" type="primary">dtd</name>
    <name type="ordered locus">Tpet_0199</name>
</gene>
<name>DTD_THEP1</name>
<keyword id="KW-0963">Cytoplasm</keyword>
<keyword id="KW-0378">Hydrolase</keyword>
<keyword id="KW-0694">RNA-binding</keyword>
<keyword id="KW-0820">tRNA-binding</keyword>
<proteinExistence type="inferred from homology"/>
<sequence>MRAVVQRVSEAKVIVEEKTVGAIKRGLLVFVGVGKDDTEEDCEWLADKVSGLRIFEDEDGKMNLSVKDINGEVLVVSQFTLYGDCRRGKRPSFTEAAPPDKGKALYERFVELLREKGLKVETGKFRAHMHVHLVNDGPVTILLDSSKLF</sequence>
<dbReference type="EC" id="3.1.1.96" evidence="1"/>
<dbReference type="EMBL" id="CP000702">
    <property type="protein sequence ID" value="ABQ46228.1"/>
    <property type="molecule type" value="Genomic_DNA"/>
</dbReference>
<dbReference type="RefSeq" id="WP_011942882.1">
    <property type="nucleotide sequence ID" value="NC_009486.1"/>
</dbReference>
<dbReference type="SMR" id="A5IJ55"/>
<dbReference type="STRING" id="390874.Tpet_0199"/>
<dbReference type="KEGG" id="tpt:Tpet_0199"/>
<dbReference type="eggNOG" id="COG1490">
    <property type="taxonomic scope" value="Bacteria"/>
</dbReference>
<dbReference type="HOGENOM" id="CLU_076901_1_0_0"/>
<dbReference type="Proteomes" id="UP000006558">
    <property type="component" value="Chromosome"/>
</dbReference>
<dbReference type="GO" id="GO:0005737">
    <property type="term" value="C:cytoplasm"/>
    <property type="evidence" value="ECO:0007669"/>
    <property type="project" value="UniProtKB-SubCell"/>
</dbReference>
<dbReference type="GO" id="GO:0051500">
    <property type="term" value="F:D-tyrosyl-tRNA(Tyr) deacylase activity"/>
    <property type="evidence" value="ECO:0007669"/>
    <property type="project" value="TreeGrafter"/>
</dbReference>
<dbReference type="GO" id="GO:0106026">
    <property type="term" value="F:Gly-tRNA(Ala) deacylase activity"/>
    <property type="evidence" value="ECO:0007669"/>
    <property type="project" value="UniProtKB-UniRule"/>
</dbReference>
<dbReference type="GO" id="GO:0043908">
    <property type="term" value="F:Ser(Gly)-tRNA(Ala) hydrolase activity"/>
    <property type="evidence" value="ECO:0007669"/>
    <property type="project" value="UniProtKB-UniRule"/>
</dbReference>
<dbReference type="GO" id="GO:0000049">
    <property type="term" value="F:tRNA binding"/>
    <property type="evidence" value="ECO:0007669"/>
    <property type="project" value="UniProtKB-UniRule"/>
</dbReference>
<dbReference type="GO" id="GO:0019478">
    <property type="term" value="P:D-amino acid catabolic process"/>
    <property type="evidence" value="ECO:0007669"/>
    <property type="project" value="UniProtKB-UniRule"/>
</dbReference>
<dbReference type="CDD" id="cd00563">
    <property type="entry name" value="Dtyr_deacylase"/>
    <property type="match status" value="1"/>
</dbReference>
<dbReference type="FunFam" id="3.50.80.10:FF:000001">
    <property type="entry name" value="D-aminoacyl-tRNA deacylase"/>
    <property type="match status" value="1"/>
</dbReference>
<dbReference type="Gene3D" id="3.50.80.10">
    <property type="entry name" value="D-tyrosyl-tRNA(Tyr) deacylase"/>
    <property type="match status" value="1"/>
</dbReference>
<dbReference type="HAMAP" id="MF_00518">
    <property type="entry name" value="Deacylase_Dtd"/>
    <property type="match status" value="1"/>
</dbReference>
<dbReference type="InterPro" id="IPR003732">
    <property type="entry name" value="Daa-tRNA_deacyls_DTD"/>
</dbReference>
<dbReference type="InterPro" id="IPR023509">
    <property type="entry name" value="DTD-like_sf"/>
</dbReference>
<dbReference type="NCBIfam" id="TIGR00256">
    <property type="entry name" value="D-aminoacyl-tRNA deacylase"/>
    <property type="match status" value="1"/>
</dbReference>
<dbReference type="PANTHER" id="PTHR10472:SF5">
    <property type="entry name" value="D-AMINOACYL-TRNA DEACYLASE 1"/>
    <property type="match status" value="1"/>
</dbReference>
<dbReference type="PANTHER" id="PTHR10472">
    <property type="entry name" value="D-TYROSYL-TRNA TYR DEACYLASE"/>
    <property type="match status" value="1"/>
</dbReference>
<dbReference type="Pfam" id="PF02580">
    <property type="entry name" value="Tyr_Deacylase"/>
    <property type="match status" value="1"/>
</dbReference>
<dbReference type="SUPFAM" id="SSF69500">
    <property type="entry name" value="DTD-like"/>
    <property type="match status" value="1"/>
</dbReference>
<protein>
    <recommendedName>
        <fullName evidence="1">D-aminoacyl-tRNA deacylase</fullName>
        <shortName evidence="1">DTD</shortName>
        <ecNumber evidence="1">3.1.1.96</ecNumber>
    </recommendedName>
    <alternativeName>
        <fullName evidence="1">Gly-tRNA(Ala) deacylase</fullName>
    </alternativeName>
</protein>
<reference key="1">
    <citation type="submission" date="2007-05" db="EMBL/GenBank/DDBJ databases">
        <title>Complete sequence of Thermotoga petrophila RKU-1.</title>
        <authorList>
            <consortium name="US DOE Joint Genome Institute"/>
            <person name="Copeland A."/>
            <person name="Lucas S."/>
            <person name="Lapidus A."/>
            <person name="Barry K."/>
            <person name="Glavina del Rio T."/>
            <person name="Dalin E."/>
            <person name="Tice H."/>
            <person name="Pitluck S."/>
            <person name="Sims D."/>
            <person name="Brettin T."/>
            <person name="Bruce D."/>
            <person name="Detter J.C."/>
            <person name="Han C."/>
            <person name="Tapia R."/>
            <person name="Schmutz J."/>
            <person name="Larimer F."/>
            <person name="Land M."/>
            <person name="Hauser L."/>
            <person name="Kyrpides N."/>
            <person name="Mikhailova N."/>
            <person name="Nelson K."/>
            <person name="Gogarten J.P."/>
            <person name="Noll K."/>
            <person name="Richardson P."/>
        </authorList>
    </citation>
    <scope>NUCLEOTIDE SEQUENCE [LARGE SCALE GENOMIC DNA]</scope>
    <source>
        <strain>ATCC BAA-488 / DSM 13995 / JCM 10881 / RKU-1</strain>
    </source>
</reference>
<feature type="chain" id="PRO_1000050902" description="D-aminoacyl-tRNA deacylase">
    <location>
        <begin position="1"/>
        <end position="149"/>
    </location>
</feature>
<feature type="short sequence motif" description="Gly-cisPro motif, important for rejection of L-amino acids" evidence="1">
    <location>
        <begin position="137"/>
        <end position="138"/>
    </location>
</feature>
<evidence type="ECO:0000255" key="1">
    <source>
        <dbReference type="HAMAP-Rule" id="MF_00518"/>
    </source>
</evidence>
<organism>
    <name type="scientific">Thermotoga petrophila (strain ATCC BAA-488 / DSM 13995 / JCM 10881 / RKU-1)</name>
    <dbReference type="NCBI Taxonomy" id="390874"/>
    <lineage>
        <taxon>Bacteria</taxon>
        <taxon>Thermotogati</taxon>
        <taxon>Thermotogota</taxon>
        <taxon>Thermotogae</taxon>
        <taxon>Thermotogales</taxon>
        <taxon>Thermotogaceae</taxon>
        <taxon>Thermotoga</taxon>
    </lineage>
</organism>
<accession>A5IJ55</accession>
<comment type="function">
    <text evidence="1">An aminoacyl-tRNA editing enzyme that deacylates mischarged D-aminoacyl-tRNAs. Also deacylates mischarged glycyl-tRNA(Ala), protecting cells against glycine mischarging by AlaRS. Acts via tRNA-based rather than protein-based catalysis; rejects L-amino acids rather than detecting D-amino acids in the active site. By recycling D-aminoacyl-tRNA to D-amino acids and free tRNA molecules, this enzyme counteracts the toxicity associated with the formation of D-aminoacyl-tRNA entities in vivo and helps enforce protein L-homochirality.</text>
</comment>
<comment type="catalytic activity">
    <reaction evidence="1">
        <text>glycyl-tRNA(Ala) + H2O = tRNA(Ala) + glycine + H(+)</text>
        <dbReference type="Rhea" id="RHEA:53744"/>
        <dbReference type="Rhea" id="RHEA-COMP:9657"/>
        <dbReference type="Rhea" id="RHEA-COMP:13640"/>
        <dbReference type="ChEBI" id="CHEBI:15377"/>
        <dbReference type="ChEBI" id="CHEBI:15378"/>
        <dbReference type="ChEBI" id="CHEBI:57305"/>
        <dbReference type="ChEBI" id="CHEBI:78442"/>
        <dbReference type="ChEBI" id="CHEBI:78522"/>
        <dbReference type="EC" id="3.1.1.96"/>
    </reaction>
</comment>
<comment type="catalytic activity">
    <reaction evidence="1">
        <text>a D-aminoacyl-tRNA + H2O = a tRNA + a D-alpha-amino acid + H(+)</text>
        <dbReference type="Rhea" id="RHEA:13953"/>
        <dbReference type="Rhea" id="RHEA-COMP:10123"/>
        <dbReference type="Rhea" id="RHEA-COMP:10124"/>
        <dbReference type="ChEBI" id="CHEBI:15377"/>
        <dbReference type="ChEBI" id="CHEBI:15378"/>
        <dbReference type="ChEBI" id="CHEBI:59871"/>
        <dbReference type="ChEBI" id="CHEBI:78442"/>
        <dbReference type="ChEBI" id="CHEBI:79333"/>
        <dbReference type="EC" id="3.1.1.96"/>
    </reaction>
</comment>
<comment type="subunit">
    <text evidence="1">Homodimer.</text>
</comment>
<comment type="subcellular location">
    <subcellularLocation>
        <location evidence="1">Cytoplasm</location>
    </subcellularLocation>
</comment>
<comment type="domain">
    <text evidence="1">A Gly-cisPro motif from one monomer fits into the active site of the other monomer to allow specific chiral rejection of L-amino acids.</text>
</comment>
<comment type="similarity">
    <text evidence="1">Belongs to the DTD family.</text>
</comment>